<accession>Q5HPY1</accession>
<protein>
    <recommendedName>
        <fullName evidence="1">Guanylate kinase</fullName>
        <ecNumber evidence="1">2.7.4.8</ecNumber>
    </recommendedName>
    <alternativeName>
        <fullName evidence="1">GMP kinase</fullName>
    </alternativeName>
</protein>
<comment type="function">
    <text evidence="1">Essential for recycling GMP and indirectly, cGMP.</text>
</comment>
<comment type="catalytic activity">
    <reaction evidence="1">
        <text>GMP + ATP = GDP + ADP</text>
        <dbReference type="Rhea" id="RHEA:20780"/>
        <dbReference type="ChEBI" id="CHEBI:30616"/>
        <dbReference type="ChEBI" id="CHEBI:58115"/>
        <dbReference type="ChEBI" id="CHEBI:58189"/>
        <dbReference type="ChEBI" id="CHEBI:456216"/>
        <dbReference type="EC" id="2.7.4.8"/>
    </reaction>
</comment>
<comment type="subcellular location">
    <subcellularLocation>
        <location evidence="1">Cytoplasm</location>
    </subcellularLocation>
</comment>
<comment type="similarity">
    <text evidence="1">Belongs to the guanylate kinase family.</text>
</comment>
<reference key="1">
    <citation type="journal article" date="2005" name="J. Bacteriol.">
        <title>Insights on evolution of virulence and resistance from the complete genome analysis of an early methicillin-resistant Staphylococcus aureus strain and a biofilm-producing methicillin-resistant Staphylococcus epidermidis strain.</title>
        <authorList>
            <person name="Gill S.R."/>
            <person name="Fouts D.E."/>
            <person name="Archer G.L."/>
            <person name="Mongodin E.F."/>
            <person name="DeBoy R.T."/>
            <person name="Ravel J."/>
            <person name="Paulsen I.T."/>
            <person name="Kolonay J.F."/>
            <person name="Brinkac L.M."/>
            <person name="Beanan M.J."/>
            <person name="Dodson R.J."/>
            <person name="Daugherty S.C."/>
            <person name="Madupu R."/>
            <person name="Angiuoli S.V."/>
            <person name="Durkin A.S."/>
            <person name="Haft D.H."/>
            <person name="Vamathevan J.J."/>
            <person name="Khouri H."/>
            <person name="Utterback T.R."/>
            <person name="Lee C."/>
            <person name="Dimitrov G."/>
            <person name="Jiang L."/>
            <person name="Qin H."/>
            <person name="Weidman J."/>
            <person name="Tran K."/>
            <person name="Kang K.H."/>
            <person name="Hance I.R."/>
            <person name="Nelson K.E."/>
            <person name="Fraser C.M."/>
        </authorList>
    </citation>
    <scope>NUCLEOTIDE SEQUENCE [LARGE SCALE GENOMIC DNA]</scope>
    <source>
        <strain>ATCC 35984 / DSM 28319 / BCRC 17069 / CCUG 31568 / BM 3577 / RP62A</strain>
    </source>
</reference>
<reference key="2">
    <citation type="submission" date="2002-10" db="EMBL/GenBank/DDBJ databases">
        <title>Establishment of a multilocus sequence typing system for Staphylococcus epidermidis.</title>
        <authorList>
            <person name="Anderson A.S."/>
            <person name="Wang X.-M."/>
            <person name="McClements W."/>
            <person name="Noble L."/>
            <person name="Jansen K."/>
        </authorList>
    </citation>
    <scope>NUCLEOTIDE SEQUENCE [GENOMIC DNA] OF 25-154</scope>
</reference>
<proteinExistence type="inferred from homology"/>
<name>KGUA_STAEQ</name>
<gene>
    <name evidence="1" type="primary">gmk</name>
    <name type="ordered locus">SERP0776</name>
</gene>
<evidence type="ECO:0000255" key="1">
    <source>
        <dbReference type="HAMAP-Rule" id="MF_00328"/>
    </source>
</evidence>
<organism>
    <name type="scientific">Staphylococcus epidermidis (strain ATCC 35984 / DSM 28319 / BCRC 17069 / CCUG 31568 / BM 3577 / RP62A)</name>
    <dbReference type="NCBI Taxonomy" id="176279"/>
    <lineage>
        <taxon>Bacteria</taxon>
        <taxon>Bacillati</taxon>
        <taxon>Bacillota</taxon>
        <taxon>Bacilli</taxon>
        <taxon>Bacillales</taxon>
        <taxon>Staphylococcaceae</taxon>
        <taxon>Staphylococcus</taxon>
    </lineage>
</organism>
<dbReference type="EC" id="2.7.4.8" evidence="1"/>
<dbReference type="EMBL" id="CP000029">
    <property type="protein sequence ID" value="AAW54187.1"/>
    <property type="molecule type" value="Genomic_DNA"/>
</dbReference>
<dbReference type="EMBL" id="AY163287">
    <property type="protein sequence ID" value="AAO60566.1"/>
    <property type="molecule type" value="Genomic_DNA"/>
</dbReference>
<dbReference type="RefSeq" id="WP_002446251.1">
    <property type="nucleotide sequence ID" value="NC_002976.3"/>
</dbReference>
<dbReference type="SMR" id="Q5HPY1"/>
<dbReference type="STRING" id="176279.SERP0776"/>
<dbReference type="KEGG" id="ser:SERP0776"/>
<dbReference type="eggNOG" id="COG0194">
    <property type="taxonomic scope" value="Bacteria"/>
</dbReference>
<dbReference type="HOGENOM" id="CLU_001715_1_2_9"/>
<dbReference type="Proteomes" id="UP000000531">
    <property type="component" value="Chromosome"/>
</dbReference>
<dbReference type="GO" id="GO:0005829">
    <property type="term" value="C:cytosol"/>
    <property type="evidence" value="ECO:0007669"/>
    <property type="project" value="TreeGrafter"/>
</dbReference>
<dbReference type="GO" id="GO:0005524">
    <property type="term" value="F:ATP binding"/>
    <property type="evidence" value="ECO:0007669"/>
    <property type="project" value="UniProtKB-UniRule"/>
</dbReference>
<dbReference type="GO" id="GO:0004385">
    <property type="term" value="F:guanylate kinase activity"/>
    <property type="evidence" value="ECO:0007669"/>
    <property type="project" value="UniProtKB-UniRule"/>
</dbReference>
<dbReference type="CDD" id="cd00071">
    <property type="entry name" value="GMPK"/>
    <property type="match status" value="1"/>
</dbReference>
<dbReference type="FunFam" id="3.40.50.300:FF:000855">
    <property type="entry name" value="Guanylate kinase"/>
    <property type="match status" value="1"/>
</dbReference>
<dbReference type="FunFam" id="3.30.63.10:FF:000002">
    <property type="entry name" value="Guanylate kinase 1"/>
    <property type="match status" value="1"/>
</dbReference>
<dbReference type="Gene3D" id="3.30.63.10">
    <property type="entry name" value="Guanylate Kinase phosphate binding domain"/>
    <property type="match status" value="1"/>
</dbReference>
<dbReference type="Gene3D" id="3.40.50.300">
    <property type="entry name" value="P-loop containing nucleotide triphosphate hydrolases"/>
    <property type="match status" value="1"/>
</dbReference>
<dbReference type="HAMAP" id="MF_00328">
    <property type="entry name" value="Guanylate_kinase"/>
    <property type="match status" value="1"/>
</dbReference>
<dbReference type="InterPro" id="IPR008145">
    <property type="entry name" value="GK/Ca_channel_bsu"/>
</dbReference>
<dbReference type="InterPro" id="IPR008144">
    <property type="entry name" value="Guanylate_kin-like_dom"/>
</dbReference>
<dbReference type="InterPro" id="IPR017665">
    <property type="entry name" value="Guanylate_kinase"/>
</dbReference>
<dbReference type="InterPro" id="IPR020590">
    <property type="entry name" value="Guanylate_kinase_CS"/>
</dbReference>
<dbReference type="InterPro" id="IPR027417">
    <property type="entry name" value="P-loop_NTPase"/>
</dbReference>
<dbReference type="NCBIfam" id="TIGR03263">
    <property type="entry name" value="guanyl_kin"/>
    <property type="match status" value="1"/>
</dbReference>
<dbReference type="PANTHER" id="PTHR23117:SF13">
    <property type="entry name" value="GUANYLATE KINASE"/>
    <property type="match status" value="1"/>
</dbReference>
<dbReference type="PANTHER" id="PTHR23117">
    <property type="entry name" value="GUANYLATE KINASE-RELATED"/>
    <property type="match status" value="1"/>
</dbReference>
<dbReference type="Pfam" id="PF00625">
    <property type="entry name" value="Guanylate_kin"/>
    <property type="match status" value="1"/>
</dbReference>
<dbReference type="SMART" id="SM00072">
    <property type="entry name" value="GuKc"/>
    <property type="match status" value="1"/>
</dbReference>
<dbReference type="SUPFAM" id="SSF52540">
    <property type="entry name" value="P-loop containing nucleoside triphosphate hydrolases"/>
    <property type="match status" value="1"/>
</dbReference>
<dbReference type="PROSITE" id="PS00856">
    <property type="entry name" value="GUANYLATE_KINASE_1"/>
    <property type="match status" value="1"/>
</dbReference>
<dbReference type="PROSITE" id="PS50052">
    <property type="entry name" value="GUANYLATE_KINASE_2"/>
    <property type="match status" value="1"/>
</dbReference>
<feature type="chain" id="PRO_0000170611" description="Guanylate kinase">
    <location>
        <begin position="1"/>
        <end position="207"/>
    </location>
</feature>
<feature type="domain" description="Guanylate kinase-like" evidence="1">
    <location>
        <begin position="6"/>
        <end position="185"/>
    </location>
</feature>
<feature type="binding site" evidence="1">
    <location>
        <begin position="13"/>
        <end position="20"/>
    </location>
    <ligand>
        <name>ATP</name>
        <dbReference type="ChEBI" id="CHEBI:30616"/>
    </ligand>
</feature>
<keyword id="KW-0067">ATP-binding</keyword>
<keyword id="KW-0963">Cytoplasm</keyword>
<keyword id="KW-0418">Kinase</keyword>
<keyword id="KW-0547">Nucleotide-binding</keyword>
<keyword id="KW-1185">Reference proteome</keyword>
<keyword id="KW-0808">Transferase</keyword>
<sequence length="207" mass="24094">MDKEKGLLIVLSGPSGVGKGTVRKKIFEDPTTSYKYSISMTTRHMREGEIDGVDYFFKTKEEFEALIKDDQFIEYAQYVGNYYGTPVQYVKDTMEEGHDVFLEIEVEGAKQVRKKFPDALFIFLAPPSLDDLRERLVGRGTESDEKIQSRVNEARKEVEMMNLYDYVVVNDEVELAKNRIQSIVEAEHLKRERIEAKYRKMLLEVKK</sequence>